<feature type="chain" id="PRO_0000220678" description="StAR-related lipid transfer protein 9">
    <location>
        <begin position="1"/>
        <end position="4700"/>
    </location>
</feature>
<feature type="domain" description="Kinesin motor" evidence="4">
    <location>
        <begin position="3"/>
        <end position="384"/>
    </location>
</feature>
<feature type="domain" description="FHA">
    <location>
        <begin position="498"/>
        <end position="569"/>
    </location>
</feature>
<feature type="domain" description="START" evidence="3">
    <location>
        <begin position="4483"/>
        <end position="4700"/>
    </location>
</feature>
<feature type="region of interest" description="Disordered" evidence="5">
    <location>
        <begin position="310"/>
        <end position="331"/>
    </location>
</feature>
<feature type="region of interest" description="Disordered" evidence="5">
    <location>
        <begin position="631"/>
        <end position="652"/>
    </location>
</feature>
<feature type="region of interest" description="Disordered" evidence="5">
    <location>
        <begin position="851"/>
        <end position="880"/>
    </location>
</feature>
<feature type="region of interest" description="Disordered" evidence="5">
    <location>
        <begin position="1057"/>
        <end position="1104"/>
    </location>
</feature>
<feature type="region of interest" description="Disordered" evidence="5">
    <location>
        <begin position="1128"/>
        <end position="1188"/>
    </location>
</feature>
<feature type="region of interest" description="Disordered" evidence="5">
    <location>
        <begin position="1939"/>
        <end position="1976"/>
    </location>
</feature>
<feature type="region of interest" description="Disordered" evidence="5">
    <location>
        <begin position="2014"/>
        <end position="2043"/>
    </location>
</feature>
<feature type="region of interest" description="Disordered" evidence="5">
    <location>
        <begin position="2088"/>
        <end position="2179"/>
    </location>
</feature>
<feature type="region of interest" description="Disordered" evidence="5">
    <location>
        <begin position="2254"/>
        <end position="2290"/>
    </location>
</feature>
<feature type="region of interest" description="Disordered" evidence="5">
    <location>
        <begin position="2377"/>
        <end position="2403"/>
    </location>
</feature>
<feature type="region of interest" description="Disordered" evidence="5">
    <location>
        <begin position="2416"/>
        <end position="2444"/>
    </location>
</feature>
<feature type="region of interest" description="Disordered" evidence="5">
    <location>
        <begin position="2479"/>
        <end position="2539"/>
    </location>
</feature>
<feature type="region of interest" description="Disordered" evidence="5">
    <location>
        <begin position="2589"/>
        <end position="2613"/>
    </location>
</feature>
<feature type="region of interest" description="Disordered" evidence="5">
    <location>
        <begin position="2642"/>
        <end position="2678"/>
    </location>
</feature>
<feature type="region of interest" description="Disordered" evidence="5">
    <location>
        <begin position="2696"/>
        <end position="2731"/>
    </location>
</feature>
<feature type="region of interest" description="Disordered" evidence="5">
    <location>
        <begin position="2765"/>
        <end position="2789"/>
    </location>
</feature>
<feature type="region of interest" description="Disordered" evidence="5">
    <location>
        <begin position="2821"/>
        <end position="2852"/>
    </location>
</feature>
<feature type="region of interest" description="Disordered" evidence="5">
    <location>
        <begin position="2892"/>
        <end position="2955"/>
    </location>
</feature>
<feature type="region of interest" description="Disordered" evidence="5">
    <location>
        <begin position="3124"/>
        <end position="3144"/>
    </location>
</feature>
<feature type="region of interest" description="Disordered" evidence="5">
    <location>
        <begin position="3199"/>
        <end position="3241"/>
    </location>
</feature>
<feature type="region of interest" description="Disordered" evidence="5">
    <location>
        <begin position="3274"/>
        <end position="3412"/>
    </location>
</feature>
<feature type="region of interest" description="Disordered" evidence="5">
    <location>
        <begin position="3564"/>
        <end position="3611"/>
    </location>
</feature>
<feature type="region of interest" description="Disordered" evidence="5">
    <location>
        <begin position="3766"/>
        <end position="3790"/>
    </location>
</feature>
<feature type="region of interest" description="Disordered" evidence="5">
    <location>
        <begin position="3830"/>
        <end position="3884"/>
    </location>
</feature>
<feature type="region of interest" description="Disordered" evidence="5">
    <location>
        <begin position="3906"/>
        <end position="3991"/>
    </location>
</feature>
<feature type="region of interest" description="Disordered" evidence="5">
    <location>
        <begin position="4033"/>
        <end position="4086"/>
    </location>
</feature>
<feature type="region of interest" description="Disordered" evidence="5">
    <location>
        <begin position="4153"/>
        <end position="4193"/>
    </location>
</feature>
<feature type="region of interest" description="Disordered" evidence="5">
    <location>
        <begin position="4397"/>
        <end position="4419"/>
    </location>
</feature>
<feature type="coiled-coil region" evidence="2">
    <location>
        <begin position="4334"/>
        <end position="4387"/>
    </location>
</feature>
<feature type="compositionally biased region" description="Low complexity" evidence="5">
    <location>
        <begin position="310"/>
        <end position="328"/>
    </location>
</feature>
<feature type="compositionally biased region" description="Basic and acidic residues" evidence="5">
    <location>
        <begin position="631"/>
        <end position="646"/>
    </location>
</feature>
<feature type="compositionally biased region" description="Basic and acidic residues" evidence="5">
    <location>
        <begin position="867"/>
        <end position="877"/>
    </location>
</feature>
<feature type="compositionally biased region" description="Acidic residues" evidence="5">
    <location>
        <begin position="1134"/>
        <end position="1146"/>
    </location>
</feature>
<feature type="compositionally biased region" description="Basic and acidic residues" evidence="5">
    <location>
        <begin position="2088"/>
        <end position="2100"/>
    </location>
</feature>
<feature type="compositionally biased region" description="Polar residues" evidence="5">
    <location>
        <begin position="2103"/>
        <end position="2118"/>
    </location>
</feature>
<feature type="compositionally biased region" description="Basic and acidic residues" evidence="5">
    <location>
        <begin position="2119"/>
        <end position="2129"/>
    </location>
</feature>
<feature type="compositionally biased region" description="Polar residues" evidence="5">
    <location>
        <begin position="2137"/>
        <end position="2148"/>
    </location>
</feature>
<feature type="compositionally biased region" description="Basic and acidic residues" evidence="5">
    <location>
        <begin position="2153"/>
        <end position="2169"/>
    </location>
</feature>
<feature type="compositionally biased region" description="Polar residues" evidence="5">
    <location>
        <begin position="2254"/>
        <end position="2266"/>
    </location>
</feature>
<feature type="compositionally biased region" description="Basic and acidic residues" evidence="5">
    <location>
        <begin position="2267"/>
        <end position="2279"/>
    </location>
</feature>
<feature type="compositionally biased region" description="Basic and acidic residues" evidence="5">
    <location>
        <begin position="2379"/>
        <end position="2391"/>
    </location>
</feature>
<feature type="compositionally biased region" description="Basic and acidic residues" evidence="5">
    <location>
        <begin position="2500"/>
        <end position="2510"/>
    </location>
</feature>
<feature type="compositionally biased region" description="Polar residues" evidence="5">
    <location>
        <begin position="2642"/>
        <end position="2653"/>
    </location>
</feature>
<feature type="compositionally biased region" description="Low complexity" evidence="5">
    <location>
        <begin position="2712"/>
        <end position="2729"/>
    </location>
</feature>
<feature type="compositionally biased region" description="Basic and acidic residues" evidence="5">
    <location>
        <begin position="2916"/>
        <end position="2925"/>
    </location>
</feature>
<feature type="compositionally biased region" description="Polar residues" evidence="5">
    <location>
        <begin position="3124"/>
        <end position="3141"/>
    </location>
</feature>
<feature type="compositionally biased region" description="Polar residues" evidence="5">
    <location>
        <begin position="3274"/>
        <end position="3285"/>
    </location>
</feature>
<feature type="compositionally biased region" description="Polar residues" evidence="5">
    <location>
        <begin position="3320"/>
        <end position="3339"/>
    </location>
</feature>
<feature type="compositionally biased region" description="Polar residues" evidence="5">
    <location>
        <begin position="3368"/>
        <end position="3387"/>
    </location>
</feature>
<feature type="compositionally biased region" description="Basic and acidic residues" evidence="5">
    <location>
        <begin position="3388"/>
        <end position="3397"/>
    </location>
</feature>
<feature type="compositionally biased region" description="Low complexity" evidence="5">
    <location>
        <begin position="3857"/>
        <end position="3872"/>
    </location>
</feature>
<feature type="compositionally biased region" description="Polar residues" evidence="5">
    <location>
        <begin position="3906"/>
        <end position="3924"/>
    </location>
</feature>
<feature type="compositionally biased region" description="Low complexity" evidence="5">
    <location>
        <begin position="3958"/>
        <end position="3975"/>
    </location>
</feature>
<feature type="compositionally biased region" description="Polar residues" evidence="5">
    <location>
        <begin position="4048"/>
        <end position="4065"/>
    </location>
</feature>
<feature type="compositionally biased region" description="Low complexity" evidence="5">
    <location>
        <begin position="4397"/>
        <end position="4411"/>
    </location>
</feature>
<feature type="binding site" evidence="4">
    <location>
        <begin position="103"/>
        <end position="110"/>
    </location>
    <ligand>
        <name>ATP</name>
        <dbReference type="ChEBI" id="CHEBI:30616"/>
    </ligand>
</feature>
<feature type="modified residue" description="Phosphoserine" evidence="1">
    <location>
        <position position="1203"/>
    </location>
</feature>
<feature type="splice variant" id="VSP_029573" description="In isoform 3." evidence="10">
    <location>
        <begin position="1"/>
        <end position="84"/>
    </location>
</feature>
<feature type="splice variant" id="VSP_029574" description="In isoform 2." evidence="11">
    <original>AQN</original>
    <variation>GIF</variation>
    <location>
        <begin position="290"/>
        <end position="292"/>
    </location>
</feature>
<feature type="splice variant" id="VSP_029575" description="In isoform 2." evidence="11">
    <location>
        <begin position="293"/>
        <end position="4700"/>
    </location>
</feature>
<feature type="splice variant" id="VSP_029576" description="In isoform 3." evidence="10">
    <original>TVSPAHTSYSETMSTLRYASSAKNIINKPRVNEDANLKLIRELREEIERLKALLLSFELRNFSSLSDENLKELVLQ</original>
    <variation>SEWDARAGPVLGLVLYLRERAMAPVSGMPELDLCWDWYSISEKGPWPQ</variation>
    <location>
        <begin position="360"/>
        <end position="435"/>
    </location>
</feature>
<feature type="splice variant" id="VSP_029577" description="In isoform 3." evidence="10">
    <location>
        <begin position="436"/>
        <end position="4700"/>
    </location>
</feature>
<feature type="sequence variant" id="VAR_059811" description="In dbSNP:rs12594837.">
    <original>R</original>
    <variation>C</variation>
    <location>
        <position position="835"/>
    </location>
</feature>
<feature type="sequence variant" id="VAR_037257" description="In dbSNP:rs12594837.">
    <original>R</original>
    <variation>C</variation>
    <location>
        <position position="1172"/>
    </location>
</feature>
<feature type="sequence variant" id="VAR_037258" description="In dbSNP:rs7161810.">
    <original>P</original>
    <variation>L</variation>
    <location>
        <position position="1720"/>
    </location>
</feature>
<feature type="sequence variant" id="VAR_037259" description="In dbSNP:rs16957055.">
    <original>A</original>
    <variation>V</variation>
    <location>
        <position position="2205"/>
    </location>
</feature>
<feature type="sequence variant" id="VAR_037260" description="In dbSNP:rs8030587.">
    <original>R</original>
    <variation>H</variation>
    <location>
        <position position="2677"/>
    </location>
</feature>
<feature type="sequence variant" id="VAR_037261" description="In dbSNP:rs8031218.">
    <original>T</original>
    <variation>I</variation>
    <location>
        <position position="2855"/>
    </location>
</feature>
<feature type="sequence variant" id="VAR_037262" description="In dbSNP:rs11857283.">
    <original>P</original>
    <variation>S</variation>
    <location>
        <position position="2869"/>
    </location>
</feature>
<feature type="sequence variant" id="VAR_037263" description="In dbSNP:rs3742995.">
    <original>R</original>
    <variation>G</variation>
    <location>
        <position position="3015"/>
    </location>
</feature>
<feature type="sequence variant" id="VAR_037264" description="In dbSNP:rs3742993." evidence="6">
    <original>N</original>
    <variation>D</variation>
    <location>
        <position position="3383"/>
    </location>
</feature>
<feature type="sequence variant" id="VAR_037266" description="In dbSNP:rs16957061.">
    <original>Y</original>
    <variation>C</variation>
    <location>
        <position position="3469"/>
    </location>
</feature>
<feature type="mutagenesis site" description="Reduced ATPase activity." evidence="8">
    <original>T</original>
    <variation>N</variation>
    <location>
        <position position="110"/>
    </location>
</feature>
<feature type="mutagenesis site" description="Reduced ability to bind microtubules." evidence="8">
    <original>R</original>
    <variation>A</variation>
    <location>
        <position position="223"/>
    </location>
</feature>
<feature type="sequence conflict" description="In Ref. 2; CAH18258." evidence="12" ref="2">
    <original>S</original>
    <variation>L</variation>
    <location>
        <position position="2602"/>
    </location>
</feature>
<feature type="sequence conflict" description="In Ref. 2; CAH18258." evidence="12" ref="2">
    <original>T</original>
    <variation>I</variation>
    <location>
        <position position="2818"/>
    </location>
</feature>
<feature type="sequence conflict" description="In Ref. 2; CAH18258." evidence="12" ref="2">
    <original>T</original>
    <variation>A</variation>
    <location>
        <position position="3633"/>
    </location>
</feature>
<feature type="sequence conflict" description="In Ref. 2; CAB63725." evidence="12" ref="2">
    <original>LPDSRD</original>
    <variation>IPGIRQ</variation>
    <location>
        <begin position="4433"/>
        <end position="4438"/>
    </location>
</feature>
<feature type="sequence conflict" description="In Ref. 4; BAA92538." evidence="12" ref="4">
    <original>R</original>
    <variation>H</variation>
    <location>
        <position position="4639"/>
    </location>
</feature>
<keyword id="KW-0025">Alternative splicing</keyword>
<keyword id="KW-0067">ATP-binding</keyword>
<keyword id="KW-0175">Coiled coil</keyword>
<keyword id="KW-0963">Cytoplasm</keyword>
<keyword id="KW-0206">Cytoskeleton</keyword>
<keyword id="KW-0505">Motor protein</keyword>
<keyword id="KW-0547">Nucleotide-binding</keyword>
<keyword id="KW-0539">Nucleus</keyword>
<keyword id="KW-0597">Phosphoprotein</keyword>
<keyword id="KW-1267">Proteomics identification</keyword>
<keyword id="KW-1185">Reference proteome</keyword>
<name>STAR9_HUMAN</name>
<organism>
    <name type="scientific">Homo sapiens</name>
    <name type="common">Human</name>
    <dbReference type="NCBI Taxonomy" id="9606"/>
    <lineage>
        <taxon>Eukaryota</taxon>
        <taxon>Metazoa</taxon>
        <taxon>Chordata</taxon>
        <taxon>Craniata</taxon>
        <taxon>Vertebrata</taxon>
        <taxon>Euteleostomi</taxon>
        <taxon>Mammalia</taxon>
        <taxon>Eutheria</taxon>
        <taxon>Euarchontoglires</taxon>
        <taxon>Primates</taxon>
        <taxon>Haplorrhini</taxon>
        <taxon>Catarrhini</taxon>
        <taxon>Hominidae</taxon>
        <taxon>Homo</taxon>
    </lineage>
</organism>
<gene>
    <name type="primary">STARD9</name>
    <name type="synonym">KIAA1300</name>
</gene>
<proteinExistence type="evidence at protein level"/>
<accession>Q9P2P6</accession>
<accession>Q68DG2</accession>
<accession>Q6AI01</accession>
<accession>Q6ZWK0</accession>
<accession>Q9UF70</accession>
<sequence length="4700" mass="516343">MANVQVAVRVRPLSKRETKEGGRIIVEVDGKVAKIRNLKVDNRPDGFGDSREKVMAFGFDYCYWSVNPEDPQYASQDVVFQDLGMEVLSGVAKGYNICLFAYGQTGSGKTYTMLGTPASVGLTPRICEGLFVREKDCASLPSSCRIKVSFLEIYNERVRDLLKQSGQKKSYTLRVREHPEMGPYVQGLSQHVVTNYKQVIQLLEEGIANRITAATHVHEASSRSHAIFTIHYTQAILENNLPSEMASKINLVDLAGSERADPSYCKDRIAEGANINKSLVTLGIVISTLAQNSQVFSSCQSLNSSVSNGGDSGILSSPSGTSSGGAPSRRQSYIPYRDSVLTWLLKDSLGGNSKTIMVATVSPAHTSYSETMSTLRYASSAKNIINKPRVNEDANLKLIRELREEIERLKALLLSFELRNFSSLSDENLKELVLQNELKIDQLTKDWTQKWNDWQALMEHYSVDINRRRAGVVIDSSLPHLMALEDDVLSTGVVLYHLKEGTTKIGRIDSDQEQDIVLQGQWIERDHCTITSACGVVVLRPARGARCTVNGREVTASCRLTQGAVITLGKAQKFRFNHPAEAAVLRQRRQVGEAAAGRGSLEWLDLDGDLAASRLGLSPLLWKERRALEEQCDEDHQTPRDGETSHRAQIQQQQSYVEDLRHQILAEEIRAAKELEFDQAWISQQIKENQQCLLREETWLASLQQQQQEDQVAEKELEASVALDAWLQTDPEIQPSPFVQSQKRVVHLQLLRRHTLRAAERNVRRKKVSFQLERIIKKQRLLEAQKRLEKLTTLCWLQDDSTQEPPYQVLSPDATVPRPPCRSKLTSCSSLSPQRLCSKHMPQLHSIFLSWDPSTTLPPRPDPTHQTSEKTSSEEHLPQAASYPARTGCLRKNGLHSSGHGQPCTARAALARKGASAPDACLTMSPNSVGIQEMEMGVKQPHQMVSQGLASLRKSANKLKPRHEPKIFTSTTQTRGAKGLADPSHTQAGWRKEGNLGTHKAAKGASCNSLYPHGPRQTAGHGKAVKTFWTEYKPPSPSRASKRHQRVLATRVRNITKKSSHLPLGSPLKRQQNTRDPDTMVPLTDFSPVMDHSREKDNDLSDTDSNYSLDSLSCVYAKALIEPLKPEERKWDFPEPENSESDDSQLSEDSLAEKRYQSPKNRLGGNRPTNNRGQPRTRTRASVRGFTAASDSDLLAQTHRSFSLDSLIDAEEELGEDQQEEPFPGSADEIPTETFWHLEDSSLPVMDQEAICRLGPINYRTAARLDAVLPMSSSFYLDPQFQPHCELQPHCELQPHCELQPHCEQAESQVEPSYSEQADSLQGMQLSRESPLMSMDSWFSCDSKINPSSPPGIVGSLCPSPDMQEFHSCKGERPGYWPNTEELKPSDAETVLPYSSKLHQGSTELLCSARDEHTASAADTSRLSLWGIQRLIQPGADGTFQGRCIPDMTQQGSSEASHNSSVSNVLAASATTLTHVGSTHERDWSALQQKYLLELSCPVLEAIGAPKPAYPYLEEDSGSLAQASSKGGDTLLPVGPRVSSNLNLNNFPVHLSRIRRLRAEKEQDSLNAKLEGVSDFFSTSEKEASYDETYSADLESLSASRSTNAQVFATENAIPDSMTEACEVKQNNLEECLQSCRKPGLMTSSDEDFFQKNACHSNVTTATKADHWSQGWAPLRKNSAVQPGQLSPDSHYPLEEEKTDCQESSKEAVRRHINVSFALPSGPELYLHSAPWNPLSSSLQPPLLETFYVTKSRDALTETALEIPACREVRVPSPPPREAWGFGHNHQALQGAYLKNNLPVLLQNQNSKIASSQQVTAEIPVDLNTREVIRESGKCPGNITEESHDSVYSSVTQNRHFLPSTSTKVCEFENQVVILNKKHSFPALEGGEVTAQSCCGASSDSTESGKSLLFRESEAREEEELDQNTVLRQTINVSLEKDMPGESAVSLKSRSVDRRVSSPVMVAQGGGPTPKWEGKNETGLLEKGLRPKDSSEEFKLPGTKPAYERFQLVACPQERNPSECKSQEMLNPNREPSGKKQNKRVNNTDEMARLIRSVMQLENGILEIESKQNKQVHASHTPGTDKELVFQDQKEQEKTDHAFRPDSSGNPLPSKDQPSSPRQTDDTVFRDSEAGAMEVNSIGNHPQVQKITPNPFRSREGVRESEPVREHTHPAGSDRPARDICDSLGKHTTCREFTNTSLHPQRMKALARALPLQPRLERSSKNNGQFVKASASLKGQPWGLGSLEELETVKGFQESQVAEHVSSSNQEEPKAQGKVEEMPMQRGGSLQEENKVTQKFPSLSQLCRDTFFRQETVSPLLSRTEFCTAPLHQDLSNTLPLNSPRWPRRCLHVPVALGISSLDCVLDLTMLKIHNSPLVTGVEHQDQSTETRSHSPEGNVRGRSSEAHTAWCGSVRSMAMGSHSQSGVPESIPLGTEDRISASTSPQDHGKDLRITLLGFSTSEDFASEAEVAVQKEIRVSSLNKVSSQPEKRVSFSLEEDSDQASKPRQKAEKETEDVGLTSGVSLAPVSLPRVPSPEPRLLEPSDHASMCLAILEEIRQAKAQRKQLHDFVARGTVLSYCETLLEPECSSRVAGRPQCKQIDQSSSDQTRNEGEAPGFHVASLSAEAGQIDLLPDERKVQATSLSADSFESLPNTETDREPWDPVQAFSHAAPAQDRKRRTGELRQFAGASEPFICHSSSSEIIEKKKDATRTPSSADPLAPDSPRSSAPVEEVRRVVSKKVVAALPSQAPYDDPRVTLHELSQSVPQETAEGIPPGSQDSSPEHQEPRTLDTTYGEVSDNLLVTAQGEKTAHFESQSVTCDVQNSTSASGPKQDHVQCPEASTGFEEGRASPKQDTILPGALTRVALEAPTQQCVQCKESVGSGLTEVCRAGSKHSRPIPLPDQRPSANPGGIGEEAPCRHPREALDGPVFSRNPEGSRTLSPSRGKESRTLPCRQPCSSQPVATHAYSSHSSTLLCFRDGDLGKEPFKAAPHTIHPPCVVPSRAYEMDETGEISRGPDVHLTHGLEPKDVNREFRLTESSTCEPSTVAAVLSRAQGCRSPSAPDVRTGSFSHSATDGSVGLIGVPEKKVAEKQASTELEAASFPAGMYSEPLRQFRDSSVGDQNAQVCQTNPEPPATTQGPHTLDLSEGSAESKLVVEPQHECLENTTRCFLEKPQFSTELRDHNRLDSQAKFVARLKHTCSPQEDSPWQEEEQHRDQASGGGEGFAQGVNPLPDEDGLDGCQILDAGREEVAVAKPPVSKILSQGFKDPATVSLRQNETPQPAAQRSGHLYTGREQPAPNHRGSLPVTTIFSGPKHSRSSPTPQFSVVGSSRSLQELNLSVEPPSPTDEDTQGPNRLWNPHLRGYSSGKSVARTSLQAEDSNQKASSRLDDGTTDHRHLKPATPPYPMPSTLSHMPTPDFTTSWMSGTLEQAQQGKREKLGVQVRPENWCSQMDKGMLHFGSSDISPYALPWRPEEPARISWKQYMSGSAVDVSCSQKPQGLTLSNVARCSSMDNGLEDQNSPFHSHLSTYANICDLSTTHSSTENAQGSNEAWEVFRGSSSIALGDPHIPTSPEGVAPTSGHDRRPQFRGPSGEADCLRSKPPLAKGSAAGPVDEIMLLYPSEAGCPVGQTRTNTFEQGTQTLGSRRHWSSTDISFAQPEASAVSAFDLASWTSMHNLSLHLSQLLHSTSELLGSLSQPDVARREQNTKRDIPDKAPQALMMDGSTQTTVDEGSQTDLTLPTLCLQTSEAEPQGANVILEGLGSDTSTVSQEEGDVPGVPQKREAEETAQKMAQLLYLQEESTPYKPQSPSIPSSHLRFQKAPVGQHLPSVSPSVSDAFLPPSSQPEESYCLVVSSPSPSSPHSPGLFPSTSEYPGDSRVQKKLGPTSALFVDRASSPILTLSASTQEPGLSPGSLTLSAPSTHPVEGHQKLDSSPDPVDAPRTPMDNYSQTTDELGGSQRGRSSLQRSNGRSFLELHSPHSPQQSPKLQFSFLGQHPQQLQPRTTIGVQSRLLPPPLRHRSQRLGNSFVPEKVASPEHCPLSGREPSQWQSRTENGGESSASPGEPQRTLDRPSSWGGLQHLSPCPVSELTDTAGLRGSALGLPQACQPEELLCFSCQMCMAPEHQHHSLRDLPVHNKFSNWCGVQKGSPGGLDMTEEELGASGDLSSEKQEQSPPQPPNDHSQDSEWSKREQIPLQVGAQNLSLSVELTEAKLHHGFGEADALLQVLQSGTGEALAADEPVTSTWKELYARQKKAIETLRRERAERLGNFCRTRSLSPQKQLSLLPNKDLFIWDLDLPSRRREYLQQLRKDVVETTRSPESVSRSAHTPSDIELMLQDYQQAHEEAKVEIARARDQLRERTEQEKLRIHQKIISQLLKEEDKLHTLANSSSLCTSSNGSLSSGMTSGYNSSPALSGQLQFPENMGHTNLPDSRDVWIGDERGGHSAVRKNSAYSHRASLGSCCCSPSSLSSLGTCFSSSYQDLAKHVVDTSMADVMAACSDNLHNLFSCQATAGWNYQGEEQAVQLYYKVFSPTRHGFLGAGVVSQPLSRVWAAVSDPTVWPLYYKPIQTARLHQRVTNSISLVYLVCNTTLCALKQPRDFCCVCVEAKEGHLSVMAAQSVYDTSMPRPSRKMVRGEILPSAWILQPITVEGKEVTRVIYLAQVELGAPGFPPQLLSSFIKRQPLVIARLASFLGR</sequence>
<protein>
    <recommendedName>
        <fullName>StAR-related lipid transfer protein 9</fullName>
    </recommendedName>
    <alternativeName>
        <fullName>START domain-containing protein 9</fullName>
        <shortName>StARD9</shortName>
    </alternativeName>
</protein>
<comment type="function">
    <text evidence="8">Microtubule-dependent motor protein required for spindle pole assembly during mitosis. Required to stabilize the pericentriolar material (PCM).</text>
</comment>
<comment type="subunit">
    <text evidence="9">Interacts with ATAD3A.</text>
</comment>
<comment type="subcellular location">
    <subcellularLocation>
        <location evidence="8">Cytoplasm</location>
        <location evidence="8">Cytoskeleton</location>
        <location evidence="8">Microtubule organizing center</location>
        <location evidence="8">Centrosome</location>
        <location evidence="8">Centriole</location>
    </subcellularLocation>
    <subcellularLocation>
        <location evidence="8">Nucleus</location>
    </subcellularLocation>
    <text>Localizes throughout the cytoplasm and nucleus during interphase. Localizes to the daughter centriole during mitosis. Disappears in cytokinesis.</text>
</comment>
<comment type="alternative products">
    <event type="alternative splicing"/>
    <isoform>
        <id>Q9P2P6-1</id>
        <name>1</name>
        <sequence type="displayed"/>
    </isoform>
    <isoform>
        <id>Q9P2P6-2</id>
        <name>2</name>
        <sequence type="described" ref="VSP_029574 VSP_029575"/>
    </isoform>
    <isoform>
        <id>Q9P2P6-3</id>
        <name>3</name>
        <sequence type="described" ref="VSP_029573 VSP_029576 VSP_029577"/>
    </isoform>
</comment>
<comment type="tissue specificity">
    <text evidence="7">Expressed in the central nervous system, muscle cells (heart and skeletal muscle), pancreas, prostate and lung.</text>
</comment>
<comment type="similarity">
    <text evidence="4">Belongs to the TRAFAC class myosin-kinesin ATPase superfamily. Kinesin family.</text>
</comment>
<comment type="sequence caution" evidence="12">
    <conflict type="erroneous initiation">
        <sequence resource="EMBL-CDS" id="CAH18258"/>
    </conflict>
    <text>Truncated N-terminus.</text>
</comment>
<comment type="sequence caution" evidence="12">
    <conflict type="erroneous termination">
        <sequence resource="EMBL-CDS" id="CAH18258"/>
    </conflict>
    <text>Truncated C-terminus.</text>
</comment>
<evidence type="ECO:0000250" key="1">
    <source>
        <dbReference type="UniProtKB" id="Q80TF6"/>
    </source>
</evidence>
<evidence type="ECO:0000255" key="2"/>
<evidence type="ECO:0000255" key="3">
    <source>
        <dbReference type="PROSITE-ProRule" id="PRU00197"/>
    </source>
</evidence>
<evidence type="ECO:0000255" key="4">
    <source>
        <dbReference type="PROSITE-ProRule" id="PRU00283"/>
    </source>
</evidence>
<evidence type="ECO:0000256" key="5">
    <source>
        <dbReference type="SAM" id="MobiDB-lite"/>
    </source>
</evidence>
<evidence type="ECO:0000269" key="6">
    <source>
    </source>
</evidence>
<evidence type="ECO:0000269" key="7">
    <source>
    </source>
</evidence>
<evidence type="ECO:0000269" key="8">
    <source>
    </source>
</evidence>
<evidence type="ECO:0000269" key="9">
    <source>
    </source>
</evidence>
<evidence type="ECO:0000303" key="10">
    <source>
    </source>
</evidence>
<evidence type="ECO:0000303" key="11">
    <source>
    </source>
</evidence>
<evidence type="ECO:0000305" key="12"/>
<reference key="1">
    <citation type="journal article" date="2004" name="Nat. Genet.">
        <title>Complete sequencing and characterization of 21,243 full-length human cDNAs.</title>
        <authorList>
            <person name="Ota T."/>
            <person name="Suzuki Y."/>
            <person name="Nishikawa T."/>
            <person name="Otsuki T."/>
            <person name="Sugiyama T."/>
            <person name="Irie R."/>
            <person name="Wakamatsu A."/>
            <person name="Hayashi K."/>
            <person name="Sato H."/>
            <person name="Nagai K."/>
            <person name="Kimura K."/>
            <person name="Makita H."/>
            <person name="Sekine M."/>
            <person name="Obayashi M."/>
            <person name="Nishi T."/>
            <person name="Shibahara T."/>
            <person name="Tanaka T."/>
            <person name="Ishii S."/>
            <person name="Yamamoto J."/>
            <person name="Saito K."/>
            <person name="Kawai Y."/>
            <person name="Isono Y."/>
            <person name="Nakamura Y."/>
            <person name="Nagahari K."/>
            <person name="Murakami K."/>
            <person name="Yasuda T."/>
            <person name="Iwayanagi T."/>
            <person name="Wagatsuma M."/>
            <person name="Shiratori A."/>
            <person name="Sudo H."/>
            <person name="Hosoiri T."/>
            <person name="Kaku Y."/>
            <person name="Kodaira H."/>
            <person name="Kondo H."/>
            <person name="Sugawara M."/>
            <person name="Takahashi M."/>
            <person name="Kanda K."/>
            <person name="Yokoi T."/>
            <person name="Furuya T."/>
            <person name="Kikkawa E."/>
            <person name="Omura Y."/>
            <person name="Abe K."/>
            <person name="Kamihara K."/>
            <person name="Katsuta N."/>
            <person name="Sato K."/>
            <person name="Tanikawa M."/>
            <person name="Yamazaki M."/>
            <person name="Ninomiya K."/>
            <person name="Ishibashi T."/>
            <person name="Yamashita H."/>
            <person name="Murakawa K."/>
            <person name="Fujimori K."/>
            <person name="Tanai H."/>
            <person name="Kimata M."/>
            <person name="Watanabe M."/>
            <person name="Hiraoka S."/>
            <person name="Chiba Y."/>
            <person name="Ishida S."/>
            <person name="Ono Y."/>
            <person name="Takiguchi S."/>
            <person name="Watanabe S."/>
            <person name="Yosida M."/>
            <person name="Hotuta T."/>
            <person name="Kusano J."/>
            <person name="Kanehori K."/>
            <person name="Takahashi-Fujii A."/>
            <person name="Hara H."/>
            <person name="Tanase T.-O."/>
            <person name="Nomura Y."/>
            <person name="Togiya S."/>
            <person name="Komai F."/>
            <person name="Hara R."/>
            <person name="Takeuchi K."/>
            <person name="Arita M."/>
            <person name="Imose N."/>
            <person name="Musashino K."/>
            <person name="Yuuki H."/>
            <person name="Oshima A."/>
            <person name="Sasaki N."/>
            <person name="Aotsuka S."/>
            <person name="Yoshikawa Y."/>
            <person name="Matsunawa H."/>
            <person name="Ichihara T."/>
            <person name="Shiohata N."/>
            <person name="Sano S."/>
            <person name="Moriya S."/>
            <person name="Momiyama H."/>
            <person name="Satoh N."/>
            <person name="Takami S."/>
            <person name="Terashima Y."/>
            <person name="Suzuki O."/>
            <person name="Nakagawa S."/>
            <person name="Senoh A."/>
            <person name="Mizoguchi H."/>
            <person name="Goto Y."/>
            <person name="Shimizu F."/>
            <person name="Wakebe H."/>
            <person name="Hishigaki H."/>
            <person name="Watanabe T."/>
            <person name="Sugiyama A."/>
            <person name="Takemoto M."/>
            <person name="Kawakami B."/>
            <person name="Yamazaki M."/>
            <person name="Watanabe K."/>
            <person name="Kumagai A."/>
            <person name="Itakura S."/>
            <person name="Fukuzumi Y."/>
            <person name="Fujimori Y."/>
            <person name="Komiyama M."/>
            <person name="Tashiro H."/>
            <person name="Tanigami A."/>
            <person name="Fujiwara T."/>
            <person name="Ono T."/>
            <person name="Yamada K."/>
            <person name="Fujii Y."/>
            <person name="Ozaki K."/>
            <person name="Hirao M."/>
            <person name="Ohmori Y."/>
            <person name="Kawabata A."/>
            <person name="Hikiji T."/>
            <person name="Kobatake N."/>
            <person name="Inagaki H."/>
            <person name="Ikema Y."/>
            <person name="Okamoto S."/>
            <person name="Okitani R."/>
            <person name="Kawakami T."/>
            <person name="Noguchi S."/>
            <person name="Itoh T."/>
            <person name="Shigeta K."/>
            <person name="Senba T."/>
            <person name="Matsumura K."/>
            <person name="Nakajima Y."/>
            <person name="Mizuno T."/>
            <person name="Morinaga M."/>
            <person name="Sasaki M."/>
            <person name="Togashi T."/>
            <person name="Oyama M."/>
            <person name="Hata H."/>
            <person name="Watanabe M."/>
            <person name="Komatsu T."/>
            <person name="Mizushima-Sugano J."/>
            <person name="Satoh T."/>
            <person name="Shirai Y."/>
            <person name="Takahashi Y."/>
            <person name="Nakagawa K."/>
            <person name="Okumura K."/>
            <person name="Nagase T."/>
            <person name="Nomura N."/>
            <person name="Kikuchi H."/>
            <person name="Masuho Y."/>
            <person name="Yamashita R."/>
            <person name="Nakai K."/>
            <person name="Yada T."/>
            <person name="Nakamura Y."/>
            <person name="Ohara O."/>
            <person name="Isogai T."/>
            <person name="Sugano S."/>
        </authorList>
    </citation>
    <scope>NUCLEOTIDE SEQUENCE [LARGE SCALE MRNA] (ISOFORM 3)</scope>
    <source>
        <tissue>Thymus</tissue>
    </source>
</reference>
<reference key="2">
    <citation type="journal article" date="2007" name="BMC Genomics">
        <title>The full-ORF clone resource of the German cDNA consortium.</title>
        <authorList>
            <person name="Bechtel S."/>
            <person name="Rosenfelder H."/>
            <person name="Duda A."/>
            <person name="Schmidt C.P."/>
            <person name="Ernst U."/>
            <person name="Wellenreuther R."/>
            <person name="Mehrle A."/>
            <person name="Schuster C."/>
            <person name="Bahr A."/>
            <person name="Bloecker H."/>
            <person name="Heubner D."/>
            <person name="Hoerlein A."/>
            <person name="Michel G."/>
            <person name="Wedler H."/>
            <person name="Koehrer K."/>
            <person name="Ottenwaelder B."/>
            <person name="Poustka A."/>
            <person name="Wiemann S."/>
            <person name="Schupp I."/>
        </authorList>
    </citation>
    <scope>NUCLEOTIDE SEQUENCE [LARGE SCALE MRNA] (ISOFORM 2)</scope>
    <scope>NUCLEOTIDE SEQUENCE [LARGE SCALE MRNA] OF 1975-4700 (ISOFORM 1)</scope>
    <source>
        <tissue>Cervix</tissue>
        <tissue>Fetal kidney</tissue>
        <tissue>Testis</tissue>
    </source>
</reference>
<reference key="3">
    <citation type="journal article" date="2006" name="Nature">
        <title>Analysis of the DNA sequence and duplication history of human chromosome 15.</title>
        <authorList>
            <person name="Zody M.C."/>
            <person name="Garber M."/>
            <person name="Sharpe T."/>
            <person name="Young S.K."/>
            <person name="Rowen L."/>
            <person name="O'Neill K."/>
            <person name="Whittaker C.A."/>
            <person name="Kamal M."/>
            <person name="Chang J.L."/>
            <person name="Cuomo C.A."/>
            <person name="Dewar K."/>
            <person name="FitzGerald M.G."/>
            <person name="Kodira C.D."/>
            <person name="Madan A."/>
            <person name="Qin S."/>
            <person name="Yang X."/>
            <person name="Abbasi N."/>
            <person name="Abouelleil A."/>
            <person name="Arachchi H.M."/>
            <person name="Baradarani L."/>
            <person name="Birditt B."/>
            <person name="Bloom S."/>
            <person name="Bloom T."/>
            <person name="Borowsky M.L."/>
            <person name="Burke J."/>
            <person name="Butler J."/>
            <person name="Cook A."/>
            <person name="DeArellano K."/>
            <person name="DeCaprio D."/>
            <person name="Dorris L. III"/>
            <person name="Dors M."/>
            <person name="Eichler E.E."/>
            <person name="Engels R."/>
            <person name="Fahey J."/>
            <person name="Fleetwood P."/>
            <person name="Friedman C."/>
            <person name="Gearin G."/>
            <person name="Hall J.L."/>
            <person name="Hensley G."/>
            <person name="Johnson E."/>
            <person name="Jones C."/>
            <person name="Kamat A."/>
            <person name="Kaur A."/>
            <person name="Locke D.P."/>
            <person name="Madan A."/>
            <person name="Munson G."/>
            <person name="Jaffe D.B."/>
            <person name="Lui A."/>
            <person name="Macdonald P."/>
            <person name="Mauceli E."/>
            <person name="Naylor J.W."/>
            <person name="Nesbitt R."/>
            <person name="Nicol R."/>
            <person name="O'Leary S.B."/>
            <person name="Ratcliffe A."/>
            <person name="Rounsley S."/>
            <person name="She X."/>
            <person name="Sneddon K.M.B."/>
            <person name="Stewart S."/>
            <person name="Sougnez C."/>
            <person name="Stone S.M."/>
            <person name="Topham K."/>
            <person name="Vincent D."/>
            <person name="Wang S."/>
            <person name="Zimmer A.R."/>
            <person name="Birren B.W."/>
            <person name="Hood L."/>
            <person name="Lander E.S."/>
            <person name="Nusbaum C."/>
        </authorList>
    </citation>
    <scope>NUCLEOTIDE SEQUENCE [LARGE SCALE GENOMIC DNA]</scope>
</reference>
<reference key="4">
    <citation type="journal article" date="2000" name="DNA Res.">
        <title>Prediction of the coding sequences of unidentified human genes. XVI. The complete sequences of 150 new cDNA clones from brain which code for large proteins in vitro.</title>
        <authorList>
            <person name="Nagase T."/>
            <person name="Kikuno R."/>
            <person name="Ishikawa K."/>
            <person name="Hirosawa M."/>
            <person name="Ohara O."/>
        </authorList>
    </citation>
    <scope>NUCLEOTIDE SEQUENCE [LARGE SCALE MRNA] OF 2881-4700 (ISOFORM 1)</scope>
    <scope>VARIANT ASP-3383</scope>
    <source>
        <tissue>Brain</tissue>
    </source>
</reference>
<reference key="5">
    <citation type="journal article" date="2006" name="Int. J. Mol. Med.">
        <title>Identification and characterization of the human StARD9 gene in the LGMD2A-region on chromosome 15q15 by in silico methods.</title>
        <authorList>
            <person name="Halama N."/>
            <person name="Grauling-Halama S.A."/>
            <person name="Jager D."/>
        </authorList>
    </citation>
    <scope>IDENTIFICATION</scope>
    <scope>TISSUE SPECIFICITY</scope>
</reference>
<reference key="6">
    <citation type="journal article" date="2011" name="Cell">
        <title>The STARD9/Kif16a kinesin associates with mitotic microtubules and regulates spindle pole assembly.</title>
        <authorList>
            <person name="Torres J.Z."/>
            <person name="Summers M.K."/>
            <person name="Peterson D."/>
            <person name="Brauer M.J."/>
            <person name="Lee J."/>
            <person name="Senese S."/>
            <person name="Gholkar A.A."/>
            <person name="Lo Y.C."/>
            <person name="Lei X."/>
            <person name="Jung K."/>
            <person name="Anderson D.C."/>
            <person name="Davis D.P."/>
            <person name="Belmont L."/>
            <person name="Jackson P.K."/>
        </authorList>
    </citation>
    <scope>FUNCTION</scope>
    <scope>SUBCELLULAR LOCATION</scope>
    <scope>MUTAGENESIS OF THR-110 AND ARG-223</scope>
</reference>
<reference key="7">
    <citation type="journal article" date="2012" name="Nucleic Acids Res.">
        <title>Mitochondrial nucleoid interacting proteins support mitochondrial protein synthesis.</title>
        <authorList>
            <person name="He J."/>
            <person name="Cooper H.M."/>
            <person name="Reyes A."/>
            <person name="Di Re M."/>
            <person name="Sembongi H."/>
            <person name="Litwin T.R."/>
            <person name="Gao J."/>
            <person name="Neuman K.C."/>
            <person name="Fearnley I.M."/>
            <person name="Spinazzola A."/>
            <person name="Walker J.E."/>
            <person name="Holt I.J."/>
        </authorList>
    </citation>
    <scope>INTERACTION WITH ATAD3A</scope>
</reference>
<dbReference type="EMBL" id="AK122666">
    <property type="protein sequence ID" value="BAC85502.1"/>
    <property type="molecule type" value="mRNA"/>
</dbReference>
<dbReference type="EMBL" id="AL133579">
    <property type="protein sequence ID" value="CAB63725.1"/>
    <property type="molecule type" value="mRNA"/>
</dbReference>
<dbReference type="EMBL" id="CR627426">
    <property type="protein sequence ID" value="CAH10513.1"/>
    <property type="molecule type" value="mRNA"/>
</dbReference>
<dbReference type="EMBL" id="CR749416">
    <property type="protein sequence ID" value="CAH18258.1"/>
    <property type="status" value="ALT_SEQ"/>
    <property type="molecule type" value="mRNA"/>
</dbReference>
<dbReference type="EMBL" id="AC018362">
    <property type="status" value="NOT_ANNOTATED_CDS"/>
    <property type="molecule type" value="Genomic_DNA"/>
</dbReference>
<dbReference type="EMBL" id="AC090510">
    <property type="status" value="NOT_ANNOTATED_CDS"/>
    <property type="molecule type" value="Genomic_DNA"/>
</dbReference>
<dbReference type="EMBL" id="AB037721">
    <property type="protein sequence ID" value="BAA92538.1"/>
    <property type="molecule type" value="mRNA"/>
</dbReference>
<dbReference type="CCDS" id="CCDS53935.1">
    <molecule id="Q9P2P6-1"/>
</dbReference>
<dbReference type="PIR" id="T43486">
    <property type="entry name" value="T43486"/>
</dbReference>
<dbReference type="RefSeq" id="NP_065810.2">
    <molecule id="Q9P2P6-1"/>
    <property type="nucleotide sequence ID" value="NM_020759.2"/>
</dbReference>
<dbReference type="SMR" id="Q9P2P6"/>
<dbReference type="BioGRID" id="121580">
    <property type="interactions" value="42"/>
</dbReference>
<dbReference type="FunCoup" id="Q9P2P6">
    <property type="interactions" value="808"/>
</dbReference>
<dbReference type="IntAct" id="Q9P2P6">
    <property type="interactions" value="17"/>
</dbReference>
<dbReference type="MINT" id="Q9P2P6"/>
<dbReference type="STRING" id="9606.ENSP00000290607"/>
<dbReference type="CarbonylDB" id="Q9P2P6"/>
<dbReference type="GlyGen" id="Q9P2P6">
    <property type="glycosylation" value="8 sites, 1 N-linked glycan (1 site), 1 O-linked glycan (2 sites)"/>
</dbReference>
<dbReference type="iPTMnet" id="Q9P2P6"/>
<dbReference type="PhosphoSitePlus" id="Q9P2P6"/>
<dbReference type="BioMuta" id="STARD9"/>
<dbReference type="DMDM" id="378405232"/>
<dbReference type="jPOST" id="Q9P2P6"/>
<dbReference type="MassIVE" id="Q9P2P6"/>
<dbReference type="PaxDb" id="9606-ENSP00000290607"/>
<dbReference type="PeptideAtlas" id="Q9P2P6"/>
<dbReference type="ProteomicsDB" id="83876">
    <molecule id="Q9P2P6-1"/>
</dbReference>
<dbReference type="ProteomicsDB" id="83877">
    <molecule id="Q9P2P6-2"/>
</dbReference>
<dbReference type="ProteomicsDB" id="83878">
    <molecule id="Q9P2P6-3"/>
</dbReference>
<dbReference type="Antibodypedia" id="23703">
    <property type="antibodies" value="38 antibodies from 11 providers"/>
</dbReference>
<dbReference type="Ensembl" id="ENST00000290607.12">
    <molecule id="Q9P2P6-1"/>
    <property type="protein sequence ID" value="ENSP00000290607.7"/>
    <property type="gene ID" value="ENSG00000159433.12"/>
</dbReference>
<dbReference type="GeneID" id="57519"/>
<dbReference type="KEGG" id="hsa:57519"/>
<dbReference type="MANE-Select" id="ENST00000290607.12">
    <property type="protein sequence ID" value="ENSP00000290607.7"/>
    <property type="RefSeq nucleotide sequence ID" value="NM_020759.3"/>
    <property type="RefSeq protein sequence ID" value="NP_065810.2"/>
</dbReference>
<dbReference type="UCSC" id="uc010udj.3">
    <molecule id="Q9P2P6-1"/>
    <property type="organism name" value="human"/>
</dbReference>
<dbReference type="AGR" id="HGNC:19162"/>
<dbReference type="CTD" id="57519"/>
<dbReference type="DisGeNET" id="57519"/>
<dbReference type="GeneCards" id="STARD9"/>
<dbReference type="HGNC" id="HGNC:19162">
    <property type="gene designation" value="STARD9"/>
</dbReference>
<dbReference type="HPA" id="ENSG00000159433">
    <property type="expression patterns" value="Low tissue specificity"/>
</dbReference>
<dbReference type="MalaCards" id="STARD9"/>
<dbReference type="MIM" id="614642">
    <property type="type" value="gene"/>
</dbReference>
<dbReference type="neXtProt" id="NX_Q9P2P6"/>
<dbReference type="OpenTargets" id="ENSG00000159433"/>
<dbReference type="VEuPathDB" id="HostDB:ENSG00000159433"/>
<dbReference type="eggNOG" id="KOG0245">
    <property type="taxonomic scope" value="Eukaryota"/>
</dbReference>
<dbReference type="GeneTree" id="ENSGT00940000164290"/>
<dbReference type="HOGENOM" id="CLU_223684_0_0_1"/>
<dbReference type="InParanoid" id="Q9P2P6"/>
<dbReference type="OMA" id="DPQFQPH"/>
<dbReference type="OrthoDB" id="3176171at2759"/>
<dbReference type="PAN-GO" id="Q9P2P6">
    <property type="GO annotations" value="6 GO annotations based on evolutionary models"/>
</dbReference>
<dbReference type="PhylomeDB" id="Q9P2P6"/>
<dbReference type="TreeFam" id="TF332626"/>
<dbReference type="PathwayCommons" id="Q9P2P6"/>
<dbReference type="SignaLink" id="Q9P2P6"/>
<dbReference type="BioGRID-ORCS" id="57519">
    <property type="hits" value="9 hits in 1156 CRISPR screens"/>
</dbReference>
<dbReference type="ChiTaRS" id="STARD9">
    <property type="organism name" value="human"/>
</dbReference>
<dbReference type="GenomeRNAi" id="57519"/>
<dbReference type="Pharos" id="Q9P2P6">
    <property type="development level" value="Tbio"/>
</dbReference>
<dbReference type="PRO" id="PR:Q9P2P6"/>
<dbReference type="Proteomes" id="UP000005640">
    <property type="component" value="Chromosome 15"/>
</dbReference>
<dbReference type="RNAct" id="Q9P2P6">
    <property type="molecule type" value="protein"/>
</dbReference>
<dbReference type="Bgee" id="ENSG00000159433">
    <property type="expression patterns" value="Expressed in sural nerve and 146 other cell types or tissues"/>
</dbReference>
<dbReference type="ExpressionAtlas" id="Q9P2P6">
    <property type="expression patterns" value="baseline and differential"/>
</dbReference>
<dbReference type="GO" id="GO:0005814">
    <property type="term" value="C:centriole"/>
    <property type="evidence" value="ECO:0000314"/>
    <property type="project" value="UniProtKB"/>
</dbReference>
<dbReference type="GO" id="GO:0005737">
    <property type="term" value="C:cytoplasm"/>
    <property type="evidence" value="ECO:0000314"/>
    <property type="project" value="UniProtKB"/>
</dbReference>
<dbReference type="GO" id="GO:0005634">
    <property type="term" value="C:nucleus"/>
    <property type="evidence" value="ECO:0000314"/>
    <property type="project" value="UniProtKB"/>
</dbReference>
<dbReference type="GO" id="GO:0005524">
    <property type="term" value="F:ATP binding"/>
    <property type="evidence" value="ECO:0007669"/>
    <property type="project" value="UniProtKB-KW"/>
</dbReference>
<dbReference type="GO" id="GO:0008289">
    <property type="term" value="F:lipid binding"/>
    <property type="evidence" value="ECO:0007669"/>
    <property type="project" value="InterPro"/>
</dbReference>
<dbReference type="GO" id="GO:0008017">
    <property type="term" value="F:microtubule binding"/>
    <property type="evidence" value="ECO:0000314"/>
    <property type="project" value="UniProtKB"/>
</dbReference>
<dbReference type="GO" id="GO:0003777">
    <property type="term" value="F:microtubule motor activity"/>
    <property type="evidence" value="ECO:0000314"/>
    <property type="project" value="UniProtKB"/>
</dbReference>
<dbReference type="GO" id="GO:0007018">
    <property type="term" value="P:microtubule-based movement"/>
    <property type="evidence" value="ECO:0007669"/>
    <property type="project" value="InterPro"/>
</dbReference>
<dbReference type="GO" id="GO:0051225">
    <property type="term" value="P:spindle assembly"/>
    <property type="evidence" value="ECO:0000315"/>
    <property type="project" value="UniProtKB"/>
</dbReference>
<dbReference type="CDD" id="cd22731">
    <property type="entry name" value="FHA_KIF16A_STARD9"/>
    <property type="match status" value="1"/>
</dbReference>
<dbReference type="CDD" id="cd01365">
    <property type="entry name" value="KISc_KIF1A_KIF1B"/>
    <property type="match status" value="1"/>
</dbReference>
<dbReference type="CDD" id="cd08874">
    <property type="entry name" value="START_STARD9-like"/>
    <property type="match status" value="1"/>
</dbReference>
<dbReference type="FunFam" id="2.60.200.20:FF:000005">
    <property type="entry name" value="Kinesin family member 16B"/>
    <property type="match status" value="1"/>
</dbReference>
<dbReference type="FunFam" id="3.40.850.10:FF:000021">
    <property type="entry name" value="kinesin-like protein KIF16B isoform X1"/>
    <property type="match status" value="1"/>
</dbReference>
<dbReference type="FunFam" id="3.30.530.20:FF:000022">
    <property type="entry name" value="StAR-related lipid transfer (START) domain-containing 9"/>
    <property type="match status" value="1"/>
</dbReference>
<dbReference type="Gene3D" id="2.60.200.20">
    <property type="match status" value="1"/>
</dbReference>
<dbReference type="Gene3D" id="3.30.530.20">
    <property type="match status" value="1"/>
</dbReference>
<dbReference type="Gene3D" id="3.40.850.10">
    <property type="entry name" value="Kinesin motor domain"/>
    <property type="match status" value="1"/>
</dbReference>
<dbReference type="InterPro" id="IPR000253">
    <property type="entry name" value="FHA_dom"/>
</dbReference>
<dbReference type="InterPro" id="IPR019821">
    <property type="entry name" value="Kinesin_motor_CS"/>
</dbReference>
<dbReference type="InterPro" id="IPR001752">
    <property type="entry name" value="Kinesin_motor_dom"/>
</dbReference>
<dbReference type="InterPro" id="IPR036961">
    <property type="entry name" value="Kinesin_motor_dom_sf"/>
</dbReference>
<dbReference type="InterPro" id="IPR027417">
    <property type="entry name" value="P-loop_NTPase"/>
</dbReference>
<dbReference type="InterPro" id="IPR008984">
    <property type="entry name" value="SMAD_FHA_dom_sf"/>
</dbReference>
<dbReference type="InterPro" id="IPR023393">
    <property type="entry name" value="START-like_dom_sf"/>
</dbReference>
<dbReference type="InterPro" id="IPR002913">
    <property type="entry name" value="START_lipid-bd_dom"/>
</dbReference>
<dbReference type="PANTHER" id="PTHR47117">
    <property type="entry name" value="STAR-RELATED LIPID TRANSFER PROTEIN 9"/>
    <property type="match status" value="1"/>
</dbReference>
<dbReference type="PANTHER" id="PTHR47117:SF1">
    <property type="entry name" value="STAR-RELATED LIPID TRANSFER PROTEIN 9"/>
    <property type="match status" value="1"/>
</dbReference>
<dbReference type="Pfam" id="PF00498">
    <property type="entry name" value="FHA"/>
    <property type="match status" value="1"/>
</dbReference>
<dbReference type="Pfam" id="PF00225">
    <property type="entry name" value="Kinesin"/>
    <property type="match status" value="1"/>
</dbReference>
<dbReference type="Pfam" id="PF01852">
    <property type="entry name" value="START"/>
    <property type="match status" value="1"/>
</dbReference>
<dbReference type="PRINTS" id="PR00380">
    <property type="entry name" value="KINESINHEAVY"/>
</dbReference>
<dbReference type="SMART" id="SM00240">
    <property type="entry name" value="FHA"/>
    <property type="match status" value="1"/>
</dbReference>
<dbReference type="SMART" id="SM00129">
    <property type="entry name" value="KISc"/>
    <property type="match status" value="1"/>
</dbReference>
<dbReference type="SUPFAM" id="SSF55961">
    <property type="entry name" value="Bet v1-like"/>
    <property type="match status" value="1"/>
</dbReference>
<dbReference type="SUPFAM" id="SSF52540">
    <property type="entry name" value="P-loop containing nucleoside triphosphate hydrolases"/>
    <property type="match status" value="1"/>
</dbReference>
<dbReference type="SUPFAM" id="SSF49879">
    <property type="entry name" value="SMAD/FHA domain"/>
    <property type="match status" value="1"/>
</dbReference>
<dbReference type="PROSITE" id="PS00411">
    <property type="entry name" value="KINESIN_MOTOR_1"/>
    <property type="match status" value="1"/>
</dbReference>
<dbReference type="PROSITE" id="PS50067">
    <property type="entry name" value="KINESIN_MOTOR_2"/>
    <property type="match status" value="1"/>
</dbReference>
<dbReference type="PROSITE" id="PS50848">
    <property type="entry name" value="START"/>
    <property type="match status" value="1"/>
</dbReference>